<accession>O04575</accession>
<accession>Q39167</accession>
<organism>
    <name type="scientific">Arabidopsis thaliana</name>
    <name type="common">Mouse-ear cress</name>
    <dbReference type="NCBI Taxonomy" id="3702"/>
    <lineage>
        <taxon>Eukaryota</taxon>
        <taxon>Viridiplantae</taxon>
        <taxon>Streptophyta</taxon>
        <taxon>Embryophyta</taxon>
        <taxon>Tracheophyta</taxon>
        <taxon>Spermatophyta</taxon>
        <taxon>Magnoliopsida</taxon>
        <taxon>eudicotyledons</taxon>
        <taxon>Gunneridae</taxon>
        <taxon>Pentapetalae</taxon>
        <taxon>rosids</taxon>
        <taxon>malvids</taxon>
        <taxon>Brassicales</taxon>
        <taxon>Brassicaceae</taxon>
        <taxon>Camelineae</taxon>
        <taxon>Arabidopsis</taxon>
    </lineage>
</organism>
<reference key="1">
    <citation type="submission" date="1995-10" db="EMBL/GenBank/DDBJ databases">
        <authorList>
            <person name="Grellet F."/>
            <person name="Cooke R."/>
            <person name="Laudie M."/>
            <person name="Raynal M."/>
            <person name="Delseny M."/>
        </authorList>
    </citation>
    <scope>NUCLEOTIDE SEQUENCE [MRNA]</scope>
    <source>
        <strain>cv. Columbia</strain>
    </source>
</reference>
<reference key="2">
    <citation type="journal article" date="2000" name="Nature">
        <title>Sequence and analysis of chromosome 1 of the plant Arabidopsis thaliana.</title>
        <authorList>
            <person name="Theologis A."/>
            <person name="Ecker J.R."/>
            <person name="Palm C.J."/>
            <person name="Federspiel N.A."/>
            <person name="Kaul S."/>
            <person name="White O."/>
            <person name="Alonso J."/>
            <person name="Altafi H."/>
            <person name="Araujo R."/>
            <person name="Bowman C.L."/>
            <person name="Brooks S.Y."/>
            <person name="Buehler E."/>
            <person name="Chan A."/>
            <person name="Chao Q."/>
            <person name="Chen H."/>
            <person name="Cheuk R.F."/>
            <person name="Chin C.W."/>
            <person name="Chung M.K."/>
            <person name="Conn L."/>
            <person name="Conway A.B."/>
            <person name="Conway A.R."/>
            <person name="Creasy T.H."/>
            <person name="Dewar K."/>
            <person name="Dunn P."/>
            <person name="Etgu P."/>
            <person name="Feldblyum T.V."/>
            <person name="Feng J.-D."/>
            <person name="Fong B."/>
            <person name="Fujii C.Y."/>
            <person name="Gill J.E."/>
            <person name="Goldsmith A.D."/>
            <person name="Haas B."/>
            <person name="Hansen N.F."/>
            <person name="Hughes B."/>
            <person name="Huizar L."/>
            <person name="Hunter J.L."/>
            <person name="Jenkins J."/>
            <person name="Johnson-Hopson C."/>
            <person name="Khan S."/>
            <person name="Khaykin E."/>
            <person name="Kim C.J."/>
            <person name="Koo H.L."/>
            <person name="Kremenetskaia I."/>
            <person name="Kurtz D.B."/>
            <person name="Kwan A."/>
            <person name="Lam B."/>
            <person name="Langin-Hooper S."/>
            <person name="Lee A."/>
            <person name="Lee J.M."/>
            <person name="Lenz C.A."/>
            <person name="Li J.H."/>
            <person name="Li Y.-P."/>
            <person name="Lin X."/>
            <person name="Liu S.X."/>
            <person name="Liu Z.A."/>
            <person name="Luros J.S."/>
            <person name="Maiti R."/>
            <person name="Marziali A."/>
            <person name="Militscher J."/>
            <person name="Miranda M."/>
            <person name="Nguyen M."/>
            <person name="Nierman W.C."/>
            <person name="Osborne B.I."/>
            <person name="Pai G."/>
            <person name="Peterson J."/>
            <person name="Pham P.K."/>
            <person name="Rizzo M."/>
            <person name="Rooney T."/>
            <person name="Rowley D."/>
            <person name="Sakano H."/>
            <person name="Salzberg S.L."/>
            <person name="Schwartz J.R."/>
            <person name="Shinn P."/>
            <person name="Southwick A.M."/>
            <person name="Sun H."/>
            <person name="Tallon L.J."/>
            <person name="Tambunga G."/>
            <person name="Toriumi M.J."/>
            <person name="Town C.D."/>
            <person name="Utterback T."/>
            <person name="Van Aken S."/>
            <person name="Vaysberg M."/>
            <person name="Vysotskaia V.S."/>
            <person name="Walker M."/>
            <person name="Wu D."/>
            <person name="Yu G."/>
            <person name="Fraser C.M."/>
            <person name="Venter J.C."/>
            <person name="Davis R.W."/>
        </authorList>
    </citation>
    <scope>NUCLEOTIDE SEQUENCE [LARGE SCALE GENOMIC DNA]</scope>
    <source>
        <strain>cv. Columbia</strain>
    </source>
</reference>
<reference key="3">
    <citation type="journal article" date="2017" name="Plant J.">
        <title>Araport11: a complete reannotation of the Arabidopsis thaliana reference genome.</title>
        <authorList>
            <person name="Cheng C.Y."/>
            <person name="Krishnakumar V."/>
            <person name="Chan A.P."/>
            <person name="Thibaud-Nissen F."/>
            <person name="Schobel S."/>
            <person name="Town C.D."/>
        </authorList>
    </citation>
    <scope>GENOME REANNOTATION</scope>
    <source>
        <strain>cv. Columbia</strain>
    </source>
</reference>
<reference key="4">
    <citation type="journal article" date="2003" name="Science">
        <title>Empirical analysis of transcriptional activity in the Arabidopsis genome.</title>
        <authorList>
            <person name="Yamada K."/>
            <person name="Lim J."/>
            <person name="Dale J.M."/>
            <person name="Chen H."/>
            <person name="Shinn P."/>
            <person name="Palm C.J."/>
            <person name="Southwick A.M."/>
            <person name="Wu H.C."/>
            <person name="Kim C.J."/>
            <person name="Nguyen M."/>
            <person name="Pham P.K."/>
            <person name="Cheuk R.F."/>
            <person name="Karlin-Newmann G."/>
            <person name="Liu S.X."/>
            <person name="Lam B."/>
            <person name="Sakano H."/>
            <person name="Wu T."/>
            <person name="Yu G."/>
            <person name="Miranda M."/>
            <person name="Quach H.L."/>
            <person name="Tripp M."/>
            <person name="Chang C.H."/>
            <person name="Lee J.M."/>
            <person name="Toriumi M.J."/>
            <person name="Chan M.M."/>
            <person name="Tang C.C."/>
            <person name="Onodera C.S."/>
            <person name="Deng J.M."/>
            <person name="Akiyama K."/>
            <person name="Ansari Y."/>
            <person name="Arakawa T."/>
            <person name="Banh J."/>
            <person name="Banno F."/>
            <person name="Bowser L."/>
            <person name="Brooks S.Y."/>
            <person name="Carninci P."/>
            <person name="Chao Q."/>
            <person name="Choy N."/>
            <person name="Enju A."/>
            <person name="Goldsmith A.D."/>
            <person name="Gurjal M."/>
            <person name="Hansen N.F."/>
            <person name="Hayashizaki Y."/>
            <person name="Johnson-Hopson C."/>
            <person name="Hsuan V.W."/>
            <person name="Iida K."/>
            <person name="Karnes M."/>
            <person name="Khan S."/>
            <person name="Koesema E."/>
            <person name="Ishida J."/>
            <person name="Jiang P.X."/>
            <person name="Jones T."/>
            <person name="Kawai J."/>
            <person name="Kamiya A."/>
            <person name="Meyers C."/>
            <person name="Nakajima M."/>
            <person name="Narusaka M."/>
            <person name="Seki M."/>
            <person name="Sakurai T."/>
            <person name="Satou M."/>
            <person name="Tamse R."/>
            <person name="Vaysberg M."/>
            <person name="Wallender E.K."/>
            <person name="Wong C."/>
            <person name="Yamamura Y."/>
            <person name="Yuan S."/>
            <person name="Shinozaki K."/>
            <person name="Davis R.W."/>
            <person name="Theologis A."/>
            <person name="Ecker J.R."/>
        </authorList>
    </citation>
    <scope>NUCLEOTIDE SEQUENCE [LARGE SCALE MRNA]</scope>
    <source>
        <strain>cv. Columbia</strain>
    </source>
</reference>
<dbReference type="EMBL" id="X91953">
    <property type="protein sequence ID" value="CAA63019.1"/>
    <property type="molecule type" value="mRNA"/>
</dbReference>
<dbReference type="EMBL" id="AC000375">
    <property type="protein sequence ID" value="AAB60757.1"/>
    <property type="molecule type" value="Genomic_DNA"/>
</dbReference>
<dbReference type="EMBL" id="CP002684">
    <property type="protein sequence ID" value="AEE33922.1"/>
    <property type="molecule type" value="Genomic_DNA"/>
</dbReference>
<dbReference type="EMBL" id="AY058148">
    <property type="protein sequence ID" value="AAL25564.1"/>
    <property type="molecule type" value="mRNA"/>
</dbReference>
<dbReference type="PIR" id="C96647">
    <property type="entry name" value="C96647"/>
</dbReference>
<dbReference type="RefSeq" id="NP_564791.1">
    <property type="nucleotide sequence ID" value="NM_104889.2"/>
</dbReference>
<dbReference type="SMR" id="O04575"/>
<dbReference type="FunCoup" id="O04575">
    <property type="interactions" value="17"/>
</dbReference>
<dbReference type="PaxDb" id="3702-AT1G62080.1"/>
<dbReference type="ProteomicsDB" id="228641"/>
<dbReference type="EnsemblPlants" id="AT1G62080.1">
    <property type="protein sequence ID" value="AT1G62080.1"/>
    <property type="gene ID" value="AT1G62080"/>
</dbReference>
<dbReference type="GeneID" id="842504"/>
<dbReference type="Gramene" id="AT1G62080.1">
    <property type="protein sequence ID" value="AT1G62080.1"/>
    <property type="gene ID" value="AT1G62080"/>
</dbReference>
<dbReference type="KEGG" id="ath:AT1G62080"/>
<dbReference type="Araport" id="AT1G62080"/>
<dbReference type="TAIR" id="AT1G62080">
    <property type="gene designation" value="TBA3"/>
</dbReference>
<dbReference type="HOGENOM" id="CLU_1770577_0_0_1"/>
<dbReference type="InParanoid" id="O04575"/>
<dbReference type="OMA" id="NVCARQP"/>
<dbReference type="PhylomeDB" id="O04575"/>
<dbReference type="PRO" id="PR:O04575"/>
<dbReference type="Proteomes" id="UP000006548">
    <property type="component" value="Chromosome 1"/>
</dbReference>
<dbReference type="GO" id="GO:0048046">
    <property type="term" value="C:apoplast"/>
    <property type="evidence" value="ECO:0000314"/>
    <property type="project" value="TAIR"/>
</dbReference>
<dbReference type="GO" id="GO:0010192">
    <property type="term" value="P:mucilage biosynthetic process"/>
    <property type="evidence" value="ECO:0000270"/>
    <property type="project" value="TAIR"/>
</dbReference>
<dbReference type="GO" id="GO:0010214">
    <property type="term" value="P:seed coat development"/>
    <property type="evidence" value="ECO:0000270"/>
    <property type="project" value="TAIR"/>
</dbReference>
<comment type="similarity">
    <text evidence="3">Belongs to the UPF0540 family.</text>
</comment>
<evidence type="ECO:0000255" key="1"/>
<evidence type="ECO:0000256" key="2">
    <source>
        <dbReference type="SAM" id="MobiDB-lite"/>
    </source>
</evidence>
<evidence type="ECO:0000305" key="3"/>
<protein>
    <recommendedName>
        <fullName>UPF0540 protein At1g62080</fullName>
    </recommendedName>
</protein>
<feature type="signal peptide" evidence="1">
    <location>
        <begin position="1"/>
        <end position="21"/>
    </location>
</feature>
<feature type="chain" id="PRO_0000326471" description="UPF0540 protein At1g62080">
    <location>
        <begin position="22"/>
        <end position="150"/>
    </location>
</feature>
<feature type="region of interest" description="Disordered" evidence="2">
    <location>
        <begin position="119"/>
        <end position="150"/>
    </location>
</feature>
<feature type="compositionally biased region" description="Low complexity" evidence="2">
    <location>
        <begin position="119"/>
        <end position="135"/>
    </location>
</feature>
<feature type="sequence conflict" description="In Ref. 1; CAA63019." evidence="3" ref="1">
    <original>A</original>
    <variation>L</variation>
    <location>
        <position position="65"/>
    </location>
</feature>
<feature type="sequence conflict" description="In Ref. 1; CAA63019." evidence="3" ref="1">
    <original>K</original>
    <variation>N</variation>
    <location>
        <position position="96"/>
    </location>
</feature>
<feature type="sequence conflict" description="In Ref. 1; CAA63019." evidence="3" ref="1">
    <original>K</original>
    <variation>N</variation>
    <location>
        <position position="149"/>
    </location>
</feature>
<sequence>MNATKFLVLLVIGVLCAIVTARQVKDLSTETKLGASLPKTTTKGIGAQLSATGSTFSSSSVVSYANGFNNPKGPGANAFESGSTFTSGQVTAKGRKARVSSASASTATGEAAAAVTRKAAAARAKGKVASASRVKGSSEKKKKDRKGKKD</sequence>
<name>U540C_ARATH</name>
<keyword id="KW-1185">Reference proteome</keyword>
<keyword id="KW-0732">Signal</keyword>
<gene>
    <name type="ordered locus">At1g62080</name>
    <name type="ORF">F19K23.3</name>
    <name type="ORF">F19K23_29</name>
</gene>
<proteinExistence type="evidence at transcript level"/>